<dbReference type="EC" id="1.1.1.8"/>
<dbReference type="EMBL" id="AP005764">
    <property type="protein sequence ID" value="BAC84439.1"/>
    <property type="status" value="ALT_SEQ"/>
    <property type="molecule type" value="Genomic_DNA"/>
</dbReference>
<dbReference type="EMBL" id="AP008213">
    <property type="protein sequence ID" value="BAF21142.1"/>
    <property type="status" value="ALT_SEQ"/>
    <property type="molecule type" value="Genomic_DNA"/>
</dbReference>
<dbReference type="EMBL" id="AP014963">
    <property type="status" value="NOT_ANNOTATED_CDS"/>
    <property type="molecule type" value="Genomic_DNA"/>
</dbReference>
<dbReference type="EMBL" id="AK065591">
    <property type="protein sequence ID" value="BAG89576.1"/>
    <property type="status" value="ALT_SEQ"/>
    <property type="molecule type" value="mRNA"/>
</dbReference>
<dbReference type="RefSeq" id="XP_015644859.1">
    <property type="nucleotide sequence ID" value="XM_015789373.1"/>
</dbReference>
<dbReference type="SMR" id="Q8H2J9"/>
<dbReference type="FunCoup" id="Q8H2J9">
    <property type="interactions" value="199"/>
</dbReference>
<dbReference type="STRING" id="39947.Q8H2J9"/>
<dbReference type="PaxDb" id="39947-Q8H2J9"/>
<dbReference type="KEGG" id="dosa:Os07g0229800"/>
<dbReference type="eggNOG" id="KOG2711">
    <property type="taxonomic scope" value="Eukaryota"/>
</dbReference>
<dbReference type="HOGENOM" id="CLU_1534724_0_0_1"/>
<dbReference type="InParanoid" id="Q8H2J9"/>
<dbReference type="OrthoDB" id="10263760at2759"/>
<dbReference type="PlantReactome" id="R-OSA-1119402">
    <property type="pathway name" value="Phospholipid biosynthesis I"/>
</dbReference>
<dbReference type="PlantReactome" id="R-OSA-1119496">
    <property type="pathway name" value="Pantothenate biosynthesis I"/>
</dbReference>
<dbReference type="PlantReactome" id="R-OSA-1119544">
    <property type="pathway name" value="Pantothenate biosynthesis II"/>
</dbReference>
<dbReference type="UniPathway" id="UPA00940"/>
<dbReference type="Proteomes" id="UP000000763">
    <property type="component" value="Chromosome 7"/>
</dbReference>
<dbReference type="Proteomes" id="UP000059680">
    <property type="component" value="Chromosome 7"/>
</dbReference>
<dbReference type="GO" id="GO:0009507">
    <property type="term" value="C:chloroplast"/>
    <property type="evidence" value="ECO:0007669"/>
    <property type="project" value="UniProtKB-SubCell"/>
</dbReference>
<dbReference type="GO" id="GO:0005829">
    <property type="term" value="C:cytosol"/>
    <property type="evidence" value="ECO:0000318"/>
    <property type="project" value="GO_Central"/>
</dbReference>
<dbReference type="GO" id="GO:0141152">
    <property type="term" value="F:glycerol-3-phosphate dehydrogenase (NAD+) activity"/>
    <property type="evidence" value="ECO:0007669"/>
    <property type="project" value="UniProtKB-EC"/>
</dbReference>
<dbReference type="GO" id="GO:0051287">
    <property type="term" value="F:NAD binding"/>
    <property type="evidence" value="ECO:0007669"/>
    <property type="project" value="InterPro"/>
</dbReference>
<dbReference type="GO" id="GO:0005975">
    <property type="term" value="P:carbohydrate metabolic process"/>
    <property type="evidence" value="ECO:0007669"/>
    <property type="project" value="InterPro"/>
</dbReference>
<dbReference type="GO" id="GO:0046168">
    <property type="term" value="P:glycerol-3-phosphate catabolic process"/>
    <property type="evidence" value="ECO:0007669"/>
    <property type="project" value="InterPro"/>
</dbReference>
<dbReference type="GO" id="GO:0006072">
    <property type="term" value="P:glycerol-3-phosphate metabolic process"/>
    <property type="evidence" value="ECO:0000318"/>
    <property type="project" value="GO_Central"/>
</dbReference>
<dbReference type="GO" id="GO:0006650">
    <property type="term" value="P:glycerophospholipid metabolic process"/>
    <property type="evidence" value="ECO:0007669"/>
    <property type="project" value="UniProtKB-UniPathway"/>
</dbReference>
<dbReference type="GO" id="GO:0008654">
    <property type="term" value="P:phospholipid biosynthetic process"/>
    <property type="evidence" value="ECO:0007669"/>
    <property type="project" value="UniProtKB-KW"/>
</dbReference>
<dbReference type="FunFam" id="1.10.1040.10:FF:000031">
    <property type="entry name" value="Glycerol-3-phosphate dehydrogenase (NAD(P)(+))"/>
    <property type="match status" value="1"/>
</dbReference>
<dbReference type="FunFam" id="3.40.50.720:FF:000019">
    <property type="entry name" value="Glycerol-3-phosphate dehydrogenase [NAD(P)+]"/>
    <property type="match status" value="1"/>
</dbReference>
<dbReference type="Gene3D" id="1.10.1040.10">
    <property type="entry name" value="N-(1-d-carboxylethyl)-l-norvaline Dehydrogenase, domain 2"/>
    <property type="match status" value="1"/>
</dbReference>
<dbReference type="Gene3D" id="3.40.50.720">
    <property type="entry name" value="NAD(P)-binding Rossmann-like Domain"/>
    <property type="match status" value="1"/>
</dbReference>
<dbReference type="HAMAP" id="MF_00394">
    <property type="entry name" value="NAD_Glyc3P_dehydrog"/>
    <property type="match status" value="1"/>
</dbReference>
<dbReference type="InterPro" id="IPR008927">
    <property type="entry name" value="6-PGluconate_DH-like_C_sf"/>
</dbReference>
<dbReference type="InterPro" id="IPR013328">
    <property type="entry name" value="6PGD_dom2"/>
</dbReference>
<dbReference type="InterPro" id="IPR006168">
    <property type="entry name" value="G3P_DH_NAD-dep"/>
</dbReference>
<dbReference type="InterPro" id="IPR006109">
    <property type="entry name" value="G3P_DH_NAD-dep_C"/>
</dbReference>
<dbReference type="InterPro" id="IPR011128">
    <property type="entry name" value="G3P_DH_NAD-dep_N"/>
</dbReference>
<dbReference type="InterPro" id="IPR036291">
    <property type="entry name" value="NAD(P)-bd_dom_sf"/>
</dbReference>
<dbReference type="NCBIfam" id="NF000940">
    <property type="entry name" value="PRK00094.1-2"/>
    <property type="match status" value="1"/>
</dbReference>
<dbReference type="NCBIfam" id="NF000942">
    <property type="entry name" value="PRK00094.1-4"/>
    <property type="match status" value="1"/>
</dbReference>
<dbReference type="PANTHER" id="PTHR11728">
    <property type="entry name" value="GLYCEROL-3-PHOSPHATE DEHYDROGENASE"/>
    <property type="match status" value="1"/>
</dbReference>
<dbReference type="PANTHER" id="PTHR11728:SF1">
    <property type="entry name" value="GLYCEROL-3-PHOSPHATE DEHYDROGENASE [NAD(+)] 2, CHLOROPLASTIC"/>
    <property type="match status" value="1"/>
</dbReference>
<dbReference type="Pfam" id="PF07479">
    <property type="entry name" value="NAD_Gly3P_dh_C"/>
    <property type="match status" value="1"/>
</dbReference>
<dbReference type="Pfam" id="PF01210">
    <property type="entry name" value="NAD_Gly3P_dh_N"/>
    <property type="match status" value="1"/>
</dbReference>
<dbReference type="PRINTS" id="PR00077">
    <property type="entry name" value="GPDHDRGNASE"/>
</dbReference>
<dbReference type="SUPFAM" id="SSF48179">
    <property type="entry name" value="6-phosphogluconate dehydrogenase C-terminal domain-like"/>
    <property type="match status" value="1"/>
</dbReference>
<dbReference type="SUPFAM" id="SSF51735">
    <property type="entry name" value="NAD(P)-binding Rossmann-fold domains"/>
    <property type="match status" value="1"/>
</dbReference>
<dbReference type="PROSITE" id="PS00957">
    <property type="entry name" value="NAD_G3PDH"/>
    <property type="match status" value="1"/>
</dbReference>
<accession>Q8H2J9</accession>
<comment type="function">
    <text evidence="1">Required to supply glycerol-3-phosphate in the chloroplast for the synthesis of glycerolipids.</text>
</comment>
<comment type="catalytic activity">
    <reaction>
        <text>sn-glycerol 3-phosphate + NAD(+) = dihydroxyacetone phosphate + NADH + H(+)</text>
        <dbReference type="Rhea" id="RHEA:11092"/>
        <dbReference type="ChEBI" id="CHEBI:15378"/>
        <dbReference type="ChEBI" id="CHEBI:57540"/>
        <dbReference type="ChEBI" id="CHEBI:57597"/>
        <dbReference type="ChEBI" id="CHEBI:57642"/>
        <dbReference type="ChEBI" id="CHEBI:57945"/>
        <dbReference type="EC" id="1.1.1.8"/>
    </reaction>
</comment>
<comment type="pathway">
    <text>Membrane lipid metabolism; glycerophospholipid metabolism.</text>
</comment>
<comment type="subcellular location">
    <subcellularLocation>
        <location evidence="1">Plastid</location>
        <location evidence="1">Chloroplast</location>
    </subcellularLocation>
</comment>
<comment type="similarity">
    <text evidence="4">Belongs to the NAD-dependent glycerol-3-phosphate dehydrogenase family.</text>
</comment>
<comment type="sequence caution" evidence="4">
    <conflict type="erroneous gene model prediction">
        <sequence resource="EMBL-CDS" id="BAC84439"/>
    </conflict>
</comment>
<comment type="sequence caution" evidence="4">
    <conflict type="erroneous gene model prediction">
        <sequence resource="EMBL-CDS" id="BAF21142"/>
    </conflict>
</comment>
<comment type="sequence caution" evidence="4">
    <conflict type="miscellaneous discrepancy">
        <sequence resource="EMBL-CDS" id="BAG89576"/>
    </conflict>
    <text>Sequencing errors.</text>
</comment>
<evidence type="ECO:0000250" key="1"/>
<evidence type="ECO:0000255" key="2"/>
<evidence type="ECO:0000256" key="3">
    <source>
        <dbReference type="SAM" id="MobiDB-lite"/>
    </source>
</evidence>
<evidence type="ECO:0000305" key="4"/>
<reference key="1">
    <citation type="journal article" date="2005" name="Nature">
        <title>The map-based sequence of the rice genome.</title>
        <authorList>
            <consortium name="International rice genome sequencing project (IRGSP)"/>
        </authorList>
    </citation>
    <scope>NUCLEOTIDE SEQUENCE [LARGE SCALE GENOMIC DNA]</scope>
    <source>
        <strain>cv. Nipponbare</strain>
    </source>
</reference>
<reference key="2">
    <citation type="journal article" date="2008" name="Nucleic Acids Res.">
        <title>The rice annotation project database (RAP-DB): 2008 update.</title>
        <authorList>
            <consortium name="The rice annotation project (RAP)"/>
        </authorList>
    </citation>
    <scope>GENOME REANNOTATION</scope>
    <source>
        <strain>cv. Nipponbare</strain>
    </source>
</reference>
<reference key="3">
    <citation type="journal article" date="2013" name="Rice">
        <title>Improvement of the Oryza sativa Nipponbare reference genome using next generation sequence and optical map data.</title>
        <authorList>
            <person name="Kawahara Y."/>
            <person name="de la Bastide M."/>
            <person name="Hamilton J.P."/>
            <person name="Kanamori H."/>
            <person name="McCombie W.R."/>
            <person name="Ouyang S."/>
            <person name="Schwartz D.C."/>
            <person name="Tanaka T."/>
            <person name="Wu J."/>
            <person name="Zhou S."/>
            <person name="Childs K.L."/>
            <person name="Davidson R.M."/>
            <person name="Lin H."/>
            <person name="Quesada-Ocampo L."/>
            <person name="Vaillancourt B."/>
            <person name="Sakai H."/>
            <person name="Lee S.S."/>
            <person name="Kim J."/>
            <person name="Numa H."/>
            <person name="Itoh T."/>
            <person name="Buell C.R."/>
            <person name="Matsumoto T."/>
        </authorList>
    </citation>
    <scope>GENOME REANNOTATION</scope>
    <source>
        <strain>cv. Nipponbare</strain>
    </source>
</reference>
<reference key="4">
    <citation type="journal article" date="2003" name="Science">
        <title>Collection, mapping, and annotation of over 28,000 cDNA clones from japonica rice.</title>
        <authorList>
            <consortium name="The rice full-length cDNA consortium"/>
        </authorList>
    </citation>
    <scope>NUCLEOTIDE SEQUENCE [LARGE SCALE MRNA]</scope>
    <source>
        <strain>cv. Nipponbare</strain>
    </source>
</reference>
<protein>
    <recommendedName>
        <fullName>Glycerol-3-phosphate dehydrogenase [NAD(+)], chloroplastic</fullName>
        <ecNumber>1.1.1.8</ecNumber>
    </recommendedName>
</protein>
<feature type="transit peptide" description="Chloroplast" evidence="2">
    <location>
        <begin position="1"/>
        <end position="47"/>
    </location>
</feature>
<feature type="chain" id="PRO_0000420175" description="Glycerol-3-phosphate dehydrogenase [NAD(+)], chloroplastic">
    <location>
        <begin position="48"/>
        <end position="440"/>
    </location>
</feature>
<feature type="region of interest" description="Disordered" evidence="3">
    <location>
        <begin position="57"/>
        <end position="76"/>
    </location>
</feature>
<feature type="active site" description="Proton acceptor" evidence="1">
    <location>
        <position position="299"/>
    </location>
</feature>
<feature type="binding site" evidence="1">
    <location>
        <begin position="114"/>
        <end position="119"/>
    </location>
    <ligand>
        <name>NAD(+)</name>
        <dbReference type="ChEBI" id="CHEBI:57540"/>
    </ligand>
</feature>
<feature type="binding site" evidence="1">
    <location>
        <position position="191"/>
    </location>
    <ligand>
        <name>NAD(+)</name>
        <dbReference type="ChEBI" id="CHEBI:57540"/>
    </ligand>
</feature>
<feature type="binding site" evidence="1">
    <location>
        <position position="214"/>
    </location>
    <ligand>
        <name>NAD(+)</name>
        <dbReference type="ChEBI" id="CHEBI:57540"/>
    </ligand>
</feature>
<feature type="binding site" evidence="1">
    <location>
        <position position="214"/>
    </location>
    <ligand>
        <name>substrate</name>
    </ligand>
</feature>
<feature type="binding site" evidence="1">
    <location>
        <position position="248"/>
    </location>
    <ligand>
        <name>NAD(+)</name>
        <dbReference type="ChEBI" id="CHEBI:57540"/>
    </ligand>
</feature>
<feature type="binding site" evidence="1">
    <location>
        <begin position="363"/>
        <end position="364"/>
    </location>
    <ligand>
        <name>substrate</name>
    </ligand>
</feature>
<feature type="binding site" evidence="1">
    <location>
        <position position="363"/>
    </location>
    <ligand>
        <name>NAD(+)</name>
        <dbReference type="ChEBI" id="CHEBI:57540"/>
    </ligand>
</feature>
<feature type="binding site" evidence="1">
    <location>
        <position position="389"/>
    </location>
    <ligand>
        <name>NAD(+)</name>
        <dbReference type="ChEBI" id="CHEBI:57540"/>
    </ligand>
</feature>
<name>GPDA_ORYSJ</name>
<keyword id="KW-0150">Chloroplast</keyword>
<keyword id="KW-0444">Lipid biosynthesis</keyword>
<keyword id="KW-0443">Lipid metabolism</keyword>
<keyword id="KW-0520">NAD</keyword>
<keyword id="KW-0560">Oxidoreductase</keyword>
<keyword id="KW-0594">Phospholipid biosynthesis</keyword>
<keyword id="KW-1208">Phospholipid metabolism</keyword>
<keyword id="KW-0934">Plastid</keyword>
<keyword id="KW-1185">Reference proteome</keyword>
<keyword id="KW-0809">Transit peptide</keyword>
<sequence>MAAAAAATFLPHTPTPRRRLAVAVHSPTRRRLSLVFSGPPDGALSVAAAEEKADAGEEAAAAVSAPRGGGGGGGKERRRVVRKAWEKLVRWSRSWRRRNRSDVVETTRKVVVLGGGSFGTAMAAQVAAKKADLEVSMLLRDDLVCRSINHSHINCKYLRDHRLPENITATTSASDALAGADFCFHAVPVQFSSSFLEGISTHVDPKLPFISLSKGLELNTLRTMSQIIPQALGNPRQPFIVLSGPSFAIELMNKLPTAMVVASKDKKLAAAVQQLLASPNLRISTSNDVTGVEIAGALKNVLAIAAGIVEGMHLGNNCMAALVAQGCSEIRWLATKMGAKPTTLSGLSGSGDIMLTCFVNLSRNRNVGLRLGSGEKLDEIMNSMNQVAEGVSTAGAVIALAQKYHVKMPVLTAVARIIDNELTPKKAVMELMNLPQVEEV</sequence>
<organism>
    <name type="scientific">Oryza sativa subsp. japonica</name>
    <name type="common">Rice</name>
    <dbReference type="NCBI Taxonomy" id="39947"/>
    <lineage>
        <taxon>Eukaryota</taxon>
        <taxon>Viridiplantae</taxon>
        <taxon>Streptophyta</taxon>
        <taxon>Embryophyta</taxon>
        <taxon>Tracheophyta</taxon>
        <taxon>Spermatophyta</taxon>
        <taxon>Magnoliopsida</taxon>
        <taxon>Liliopsida</taxon>
        <taxon>Poales</taxon>
        <taxon>Poaceae</taxon>
        <taxon>BOP clade</taxon>
        <taxon>Oryzoideae</taxon>
        <taxon>Oryzeae</taxon>
        <taxon>Oryzinae</taxon>
        <taxon>Oryza</taxon>
        <taxon>Oryza sativa</taxon>
    </lineage>
</organism>
<gene>
    <name type="ordered locus">Os07g0229800</name>
    <name type="ordered locus">LOC_Os07g12640</name>
    <name type="ORF">OSJNBa0016A21.127</name>
</gene>
<proteinExistence type="evidence at transcript level"/>